<protein>
    <recommendedName>
        <fullName>Probable WRKY transcription factor 56</fullName>
    </recommendedName>
    <alternativeName>
        <fullName>WRKY DNA-binding protein 56</fullName>
    </alternativeName>
</protein>
<feature type="chain" id="PRO_0000133697" description="Probable WRKY transcription factor 56">
    <location>
        <begin position="1"/>
        <end position="195"/>
    </location>
</feature>
<feature type="DNA-binding region" description="WRKY" evidence="2">
    <location>
        <begin position="108"/>
        <end position="173"/>
    </location>
</feature>
<feature type="region of interest" description="Disordered" evidence="3">
    <location>
        <begin position="1"/>
        <end position="20"/>
    </location>
</feature>
<feature type="region of interest" description="Disordered" evidence="3">
    <location>
        <begin position="70"/>
        <end position="93"/>
    </location>
</feature>
<feature type="compositionally biased region" description="Polar residues" evidence="3">
    <location>
        <begin position="1"/>
        <end position="10"/>
    </location>
</feature>
<feature type="sequence conflict" description="In Ref. 4; AAM65997." evidence="4" ref="4">
    <original>G</original>
    <variation>A</variation>
    <location>
        <position position="72"/>
    </location>
</feature>
<feature type="sequence conflict" description="In Ref. 4; AAM65997." evidence="4" ref="4">
    <original>L</original>
    <variation>S</variation>
    <location>
        <position position="97"/>
    </location>
</feature>
<feature type="sequence conflict" description="In Ref. 4; AAM65997." evidence="4" ref="4">
    <original>R</original>
    <variation>K</variation>
    <location>
        <position position="184"/>
    </location>
</feature>
<sequence>MEGVDNTNPMLTLEEGENNNPFSSLDDKTLMMMAPSLIFSGDVGPSSSSCTPAGYHLSAQLENFRGGGGEMGGLVSNNSNNSDHNKNCNKGKGKRTLAMQRIAFHTRSDDDVLDDGYRWRKYGQKSVKNNAHPRSYYRCTYHTCNVKKQVQRLAKDPNVVVTTYEGVHNHPCEKLMETLSPLLRQLQFLSRVSDL</sequence>
<gene>
    <name type="primary">WRKY56</name>
    <name type="ordered locus">At1g64000</name>
    <name type="ORF">F22C12.23</name>
</gene>
<comment type="function">
    <text evidence="1">Transcription factor. Interacts specifically with the W box (5'-(T)TGAC[CT]-3'), a frequently occurring elicitor-responsive cis-acting element (By similarity).</text>
</comment>
<comment type="interaction">
    <interactant intactId="EBI-25517688">
        <id>Q8VWQ4</id>
    </interactant>
    <interactant intactId="EBI-25517681">
        <id>A0A178VL61</id>
        <label>AXX17_At2g18500</label>
    </interactant>
    <organismsDiffer>false</organismsDiffer>
    <experiments>3</experiments>
</comment>
<comment type="interaction">
    <interactant intactId="EBI-25517688">
        <id>Q8VWQ4</id>
    </interactant>
    <interactant intactId="EBI-25517843">
        <id>Q9SZG3</id>
        <label>VQ29</label>
    </interactant>
    <organismsDiffer>false</organismsDiffer>
    <experiments>3</experiments>
</comment>
<comment type="interaction">
    <interactant intactId="EBI-25517688">
        <id>Q8VWQ4</id>
    </interactant>
    <interactant intactId="EBI-25517821">
        <id>Q9FNP0</id>
        <label>VQ31</label>
    </interactant>
    <organismsDiffer>false</organismsDiffer>
    <experiments>3</experiments>
</comment>
<comment type="subcellular location">
    <subcellularLocation>
        <location evidence="4">Nucleus</location>
    </subcellularLocation>
</comment>
<comment type="similarity">
    <text evidence="4">Belongs to the WRKY group II-c family.</text>
</comment>
<comment type="sequence caution" evidence="4">
    <conflict type="erroneous gene model prediction">
        <sequence resource="EMBL-CDS" id="AAF24572"/>
    </conflict>
</comment>
<keyword id="KW-0238">DNA-binding</keyword>
<keyword id="KW-0539">Nucleus</keyword>
<keyword id="KW-1185">Reference proteome</keyword>
<keyword id="KW-0804">Transcription</keyword>
<keyword id="KW-0805">Transcription regulation</keyword>
<reference key="1">
    <citation type="submission" date="2001-12" db="EMBL/GenBank/DDBJ databases">
        <title>Arabidopsis thaliana transcription factor WRKY56.</title>
        <authorList>
            <person name="Ulker B."/>
            <person name="Kushnir S."/>
            <person name="Somssich I.E."/>
        </authorList>
    </citation>
    <scope>NUCLEOTIDE SEQUENCE [MRNA]</scope>
    <source>
        <strain>cv. Columbia</strain>
        <tissue>Flower</tissue>
    </source>
</reference>
<reference key="2">
    <citation type="journal article" date="2000" name="Nature">
        <title>Sequence and analysis of chromosome 1 of the plant Arabidopsis thaliana.</title>
        <authorList>
            <person name="Theologis A."/>
            <person name="Ecker J.R."/>
            <person name="Palm C.J."/>
            <person name="Federspiel N.A."/>
            <person name="Kaul S."/>
            <person name="White O."/>
            <person name="Alonso J."/>
            <person name="Altafi H."/>
            <person name="Araujo R."/>
            <person name="Bowman C.L."/>
            <person name="Brooks S.Y."/>
            <person name="Buehler E."/>
            <person name="Chan A."/>
            <person name="Chao Q."/>
            <person name="Chen H."/>
            <person name="Cheuk R.F."/>
            <person name="Chin C.W."/>
            <person name="Chung M.K."/>
            <person name="Conn L."/>
            <person name="Conway A.B."/>
            <person name="Conway A.R."/>
            <person name="Creasy T.H."/>
            <person name="Dewar K."/>
            <person name="Dunn P."/>
            <person name="Etgu P."/>
            <person name="Feldblyum T.V."/>
            <person name="Feng J.-D."/>
            <person name="Fong B."/>
            <person name="Fujii C.Y."/>
            <person name="Gill J.E."/>
            <person name="Goldsmith A.D."/>
            <person name="Haas B."/>
            <person name="Hansen N.F."/>
            <person name="Hughes B."/>
            <person name="Huizar L."/>
            <person name="Hunter J.L."/>
            <person name="Jenkins J."/>
            <person name="Johnson-Hopson C."/>
            <person name="Khan S."/>
            <person name="Khaykin E."/>
            <person name="Kim C.J."/>
            <person name="Koo H.L."/>
            <person name="Kremenetskaia I."/>
            <person name="Kurtz D.B."/>
            <person name="Kwan A."/>
            <person name="Lam B."/>
            <person name="Langin-Hooper S."/>
            <person name="Lee A."/>
            <person name="Lee J.M."/>
            <person name="Lenz C.A."/>
            <person name="Li J.H."/>
            <person name="Li Y.-P."/>
            <person name="Lin X."/>
            <person name="Liu S.X."/>
            <person name="Liu Z.A."/>
            <person name="Luros J.S."/>
            <person name="Maiti R."/>
            <person name="Marziali A."/>
            <person name="Militscher J."/>
            <person name="Miranda M."/>
            <person name="Nguyen M."/>
            <person name="Nierman W.C."/>
            <person name="Osborne B.I."/>
            <person name="Pai G."/>
            <person name="Peterson J."/>
            <person name="Pham P.K."/>
            <person name="Rizzo M."/>
            <person name="Rooney T."/>
            <person name="Rowley D."/>
            <person name="Sakano H."/>
            <person name="Salzberg S.L."/>
            <person name="Schwartz J.R."/>
            <person name="Shinn P."/>
            <person name="Southwick A.M."/>
            <person name="Sun H."/>
            <person name="Tallon L.J."/>
            <person name="Tambunga G."/>
            <person name="Toriumi M.J."/>
            <person name="Town C.D."/>
            <person name="Utterback T."/>
            <person name="Van Aken S."/>
            <person name="Vaysberg M."/>
            <person name="Vysotskaia V.S."/>
            <person name="Walker M."/>
            <person name="Wu D."/>
            <person name="Yu G."/>
            <person name="Fraser C.M."/>
            <person name="Venter J.C."/>
            <person name="Davis R.W."/>
        </authorList>
    </citation>
    <scope>NUCLEOTIDE SEQUENCE [LARGE SCALE GENOMIC DNA]</scope>
    <source>
        <strain>cv. Columbia</strain>
    </source>
</reference>
<reference key="3">
    <citation type="journal article" date="2017" name="Plant J.">
        <title>Araport11: a complete reannotation of the Arabidopsis thaliana reference genome.</title>
        <authorList>
            <person name="Cheng C.Y."/>
            <person name="Krishnakumar V."/>
            <person name="Chan A.P."/>
            <person name="Thibaud-Nissen F."/>
            <person name="Schobel S."/>
            <person name="Town C.D."/>
        </authorList>
    </citation>
    <scope>GENOME REANNOTATION</scope>
    <source>
        <strain>cv. Columbia</strain>
    </source>
</reference>
<reference key="4">
    <citation type="submission" date="2002-03" db="EMBL/GenBank/DDBJ databases">
        <title>Full-length cDNA from Arabidopsis thaliana.</title>
        <authorList>
            <person name="Brover V.V."/>
            <person name="Troukhan M.E."/>
            <person name="Alexandrov N.A."/>
            <person name="Lu Y.-P."/>
            <person name="Flavell R.B."/>
            <person name="Feldmann K.A."/>
        </authorList>
    </citation>
    <scope>NUCLEOTIDE SEQUENCE [LARGE SCALE MRNA]</scope>
</reference>
<dbReference type="EMBL" id="AY071848">
    <property type="protein sequence ID" value="AAL61858.1"/>
    <property type="molecule type" value="mRNA"/>
</dbReference>
<dbReference type="EMBL" id="AC007764">
    <property type="protein sequence ID" value="AAF24572.1"/>
    <property type="status" value="ALT_SEQ"/>
    <property type="molecule type" value="Genomic_DNA"/>
</dbReference>
<dbReference type="EMBL" id="CP002684">
    <property type="protein sequence ID" value="AEE34179.1"/>
    <property type="molecule type" value="Genomic_DNA"/>
</dbReference>
<dbReference type="EMBL" id="AY088461">
    <property type="protein sequence ID" value="AAM65997.1"/>
    <property type="molecule type" value="mRNA"/>
</dbReference>
<dbReference type="RefSeq" id="NP_176583.1">
    <property type="nucleotide sequence ID" value="NM_105073.2"/>
</dbReference>
<dbReference type="SMR" id="Q8VWQ4"/>
<dbReference type="BioGRID" id="27924">
    <property type="interactions" value="3"/>
</dbReference>
<dbReference type="FunCoup" id="Q8VWQ4">
    <property type="interactions" value="288"/>
</dbReference>
<dbReference type="IntAct" id="Q8VWQ4">
    <property type="interactions" value="3"/>
</dbReference>
<dbReference type="STRING" id="3702.Q8VWQ4"/>
<dbReference type="PaxDb" id="3702-AT1G64000.1"/>
<dbReference type="ProteomicsDB" id="234175"/>
<dbReference type="EnsemblPlants" id="AT1G64000.1">
    <property type="protein sequence ID" value="AT1G64000.1"/>
    <property type="gene ID" value="AT1G64000"/>
</dbReference>
<dbReference type="GeneID" id="842703"/>
<dbReference type="Gramene" id="AT1G64000.1">
    <property type="protein sequence ID" value="AT1G64000.1"/>
    <property type="gene ID" value="AT1G64000"/>
</dbReference>
<dbReference type="KEGG" id="ath:AT1G64000"/>
<dbReference type="Araport" id="AT1G64000"/>
<dbReference type="TAIR" id="AT1G64000">
    <property type="gene designation" value="WRKY56"/>
</dbReference>
<dbReference type="eggNOG" id="ENOG502RXZS">
    <property type="taxonomic scope" value="Eukaryota"/>
</dbReference>
<dbReference type="HOGENOM" id="CLU_073202_4_0_1"/>
<dbReference type="InParanoid" id="Q8VWQ4"/>
<dbReference type="OMA" id="DDKTLMM"/>
<dbReference type="PhylomeDB" id="Q8VWQ4"/>
<dbReference type="PRO" id="PR:Q8VWQ4"/>
<dbReference type="Proteomes" id="UP000006548">
    <property type="component" value="Chromosome 1"/>
</dbReference>
<dbReference type="ExpressionAtlas" id="Q8VWQ4">
    <property type="expression patterns" value="baseline and differential"/>
</dbReference>
<dbReference type="GO" id="GO:0005634">
    <property type="term" value="C:nucleus"/>
    <property type="evidence" value="ECO:0007669"/>
    <property type="project" value="UniProtKB-SubCell"/>
</dbReference>
<dbReference type="GO" id="GO:0003700">
    <property type="term" value="F:DNA-binding transcription factor activity"/>
    <property type="evidence" value="ECO:0000250"/>
    <property type="project" value="TAIR"/>
</dbReference>
<dbReference type="GO" id="GO:0043565">
    <property type="term" value="F:sequence-specific DNA binding"/>
    <property type="evidence" value="ECO:0007669"/>
    <property type="project" value="InterPro"/>
</dbReference>
<dbReference type="FunFam" id="2.20.25.80:FF:000003">
    <property type="entry name" value="WRKY transcription factor 57"/>
    <property type="match status" value="1"/>
</dbReference>
<dbReference type="Gene3D" id="2.20.25.80">
    <property type="entry name" value="WRKY domain"/>
    <property type="match status" value="1"/>
</dbReference>
<dbReference type="InterPro" id="IPR003657">
    <property type="entry name" value="WRKY_dom"/>
</dbReference>
<dbReference type="InterPro" id="IPR036576">
    <property type="entry name" value="WRKY_dom_sf"/>
</dbReference>
<dbReference type="InterPro" id="IPR044810">
    <property type="entry name" value="WRKY_plant"/>
</dbReference>
<dbReference type="PANTHER" id="PTHR31221:SF208">
    <property type="entry name" value="WRKY TRANSCRIPTION FACTOR 56-RELATED"/>
    <property type="match status" value="1"/>
</dbReference>
<dbReference type="PANTHER" id="PTHR31221">
    <property type="entry name" value="WRKY TRANSCRIPTION FACTOR PROTEIN 1-RELATED"/>
    <property type="match status" value="1"/>
</dbReference>
<dbReference type="Pfam" id="PF03106">
    <property type="entry name" value="WRKY"/>
    <property type="match status" value="1"/>
</dbReference>
<dbReference type="SMART" id="SM00774">
    <property type="entry name" value="WRKY"/>
    <property type="match status" value="1"/>
</dbReference>
<dbReference type="SUPFAM" id="SSF118290">
    <property type="entry name" value="WRKY DNA-binding domain"/>
    <property type="match status" value="1"/>
</dbReference>
<dbReference type="PROSITE" id="PS50811">
    <property type="entry name" value="WRKY"/>
    <property type="match status" value="1"/>
</dbReference>
<organism>
    <name type="scientific">Arabidopsis thaliana</name>
    <name type="common">Mouse-ear cress</name>
    <dbReference type="NCBI Taxonomy" id="3702"/>
    <lineage>
        <taxon>Eukaryota</taxon>
        <taxon>Viridiplantae</taxon>
        <taxon>Streptophyta</taxon>
        <taxon>Embryophyta</taxon>
        <taxon>Tracheophyta</taxon>
        <taxon>Spermatophyta</taxon>
        <taxon>Magnoliopsida</taxon>
        <taxon>eudicotyledons</taxon>
        <taxon>Gunneridae</taxon>
        <taxon>Pentapetalae</taxon>
        <taxon>rosids</taxon>
        <taxon>malvids</taxon>
        <taxon>Brassicales</taxon>
        <taxon>Brassicaceae</taxon>
        <taxon>Camelineae</taxon>
        <taxon>Arabidopsis</taxon>
    </lineage>
</organism>
<name>WRK56_ARATH</name>
<evidence type="ECO:0000250" key="1"/>
<evidence type="ECO:0000255" key="2">
    <source>
        <dbReference type="PROSITE-ProRule" id="PRU00223"/>
    </source>
</evidence>
<evidence type="ECO:0000256" key="3">
    <source>
        <dbReference type="SAM" id="MobiDB-lite"/>
    </source>
</evidence>
<evidence type="ECO:0000305" key="4"/>
<proteinExistence type="evidence at protein level"/>
<accession>Q8VWQ4</accession>
<accession>Q8L9F6</accession>
<accession>Q9SH51</accession>